<protein>
    <recommendedName>
        <fullName>Zinc finger CCCH domain-containing protein 63</fullName>
        <shortName>OsC3H63</shortName>
    </recommendedName>
</protein>
<feature type="chain" id="PRO_0000346854" description="Zinc finger CCCH domain-containing protein 63">
    <location>
        <begin position="1"/>
        <end position="444"/>
    </location>
</feature>
<feature type="zinc finger region" description="C3H1-type 1" evidence="1">
    <location>
        <begin position="56"/>
        <end position="84"/>
    </location>
</feature>
<feature type="zinc finger region" description="C3H1-type 2" evidence="1">
    <location>
        <begin position="101"/>
        <end position="129"/>
    </location>
</feature>
<feature type="zinc finger region" description="C3H1-type 3" evidence="1">
    <location>
        <begin position="147"/>
        <end position="175"/>
    </location>
</feature>
<feature type="zinc finger region" description="C3H1-type 4" evidence="1">
    <location>
        <begin position="309"/>
        <end position="337"/>
    </location>
</feature>
<feature type="zinc finger region" description="C3H1-type 5" evidence="1">
    <location>
        <begin position="355"/>
        <end position="383"/>
    </location>
</feature>
<feature type="region of interest" description="Disordered" evidence="2">
    <location>
        <begin position="251"/>
        <end position="276"/>
    </location>
</feature>
<feature type="region of interest" description="Disordered" evidence="2">
    <location>
        <begin position="405"/>
        <end position="444"/>
    </location>
</feature>
<feature type="splice variant" id="VSP_035023" description="In isoform 2." evidence="3">
    <location>
        <begin position="1"/>
        <end position="38"/>
    </location>
</feature>
<feature type="sequence conflict" description="In Ref. 5; AK110345." evidence="4" ref="5">
    <original>D</original>
    <variation>G</variation>
    <location>
        <position position="281"/>
    </location>
</feature>
<comment type="alternative products">
    <event type="alternative splicing"/>
    <isoform>
        <id>Q2R4J4-1</id>
        <name>1</name>
        <sequence type="displayed"/>
    </isoform>
    <isoform>
        <id>Q2R4J4-2</id>
        <name>2</name>
        <sequence type="described" ref="VSP_035023"/>
    </isoform>
</comment>
<comment type="sequence caution" evidence="4">
    <conflict type="erroneous initiation">
        <sequence resource="EMBL-CDS" id="BAF28241"/>
    </conflict>
</comment>
<comment type="sequence caution" evidence="4">
    <molecule>Isoform 2</molecule>
    <conflict type="frameshift">
        <sequence resource="EMBL" id="AK110345"/>
    </conflict>
</comment>
<keyword id="KW-0025">Alternative splicing</keyword>
<keyword id="KW-0238">DNA-binding</keyword>
<keyword id="KW-0479">Metal-binding</keyword>
<keyword id="KW-1185">Reference proteome</keyword>
<keyword id="KW-0677">Repeat</keyword>
<keyword id="KW-0862">Zinc</keyword>
<keyword id="KW-0863">Zinc-finger</keyword>
<name>C3H63_ORYSJ</name>
<dbReference type="EMBL" id="DP000010">
    <property type="protein sequence ID" value="ABA93650.2"/>
    <property type="molecule type" value="Genomic_DNA"/>
</dbReference>
<dbReference type="EMBL" id="AP008217">
    <property type="protein sequence ID" value="BAF28241.1"/>
    <property type="status" value="ALT_INIT"/>
    <property type="molecule type" value="Genomic_DNA"/>
</dbReference>
<dbReference type="EMBL" id="AP014967">
    <property type="status" value="NOT_ANNOTATED_CDS"/>
    <property type="molecule type" value="Genomic_DNA"/>
</dbReference>
<dbReference type="EMBL" id="AK110345">
    <property type="status" value="NOT_ANNOTATED_CDS"/>
    <property type="molecule type" value="mRNA"/>
</dbReference>
<dbReference type="RefSeq" id="XP_015617449.1">
    <property type="nucleotide sequence ID" value="XM_015761963.1"/>
</dbReference>
<dbReference type="FunCoup" id="Q2R4J4">
    <property type="interactions" value="983"/>
</dbReference>
<dbReference type="STRING" id="39947.Q2R4J4"/>
<dbReference type="PaxDb" id="39947-Q2R4J4"/>
<dbReference type="KEGG" id="dosa:Os11g0472000"/>
<dbReference type="eggNOG" id="KOG1677">
    <property type="taxonomic scope" value="Eukaryota"/>
</dbReference>
<dbReference type="HOGENOM" id="CLU_033292_2_1_1"/>
<dbReference type="InParanoid" id="Q2R4J4"/>
<dbReference type="OrthoDB" id="411372at2759"/>
<dbReference type="Proteomes" id="UP000000763">
    <property type="component" value="Chromosome 11"/>
</dbReference>
<dbReference type="Proteomes" id="UP000059680">
    <property type="component" value="Chromosome 11"/>
</dbReference>
<dbReference type="GO" id="GO:0003677">
    <property type="term" value="F:DNA binding"/>
    <property type="evidence" value="ECO:0007669"/>
    <property type="project" value="UniProtKB-KW"/>
</dbReference>
<dbReference type="GO" id="GO:0003729">
    <property type="term" value="F:mRNA binding"/>
    <property type="evidence" value="ECO:0000318"/>
    <property type="project" value="GO_Central"/>
</dbReference>
<dbReference type="GO" id="GO:0008270">
    <property type="term" value="F:zinc ion binding"/>
    <property type="evidence" value="ECO:0007669"/>
    <property type="project" value="UniProtKB-KW"/>
</dbReference>
<dbReference type="FunFam" id="4.10.1000.10:FF:000028">
    <property type="entry name" value="Zinc finger nuclease 2"/>
    <property type="match status" value="1"/>
</dbReference>
<dbReference type="Gene3D" id="4.10.1000.10">
    <property type="entry name" value="Zinc finger, CCCH-type"/>
    <property type="match status" value="3"/>
</dbReference>
<dbReference type="InterPro" id="IPR050974">
    <property type="entry name" value="Plant_ZF_CCCH"/>
</dbReference>
<dbReference type="InterPro" id="IPR000571">
    <property type="entry name" value="Znf_CCCH"/>
</dbReference>
<dbReference type="InterPro" id="IPR036855">
    <property type="entry name" value="Znf_CCCH_sf"/>
</dbReference>
<dbReference type="PANTHER" id="PTHR12506">
    <property type="entry name" value="PROTEIN PHOSPHATASE RELATED"/>
    <property type="match status" value="1"/>
</dbReference>
<dbReference type="PANTHER" id="PTHR12506:SF18">
    <property type="entry name" value="ZINC FINGER CCCH DOMAIN-CONTAINING PROTEIN 33-RELATED"/>
    <property type="match status" value="1"/>
</dbReference>
<dbReference type="Pfam" id="PF00642">
    <property type="entry name" value="zf-CCCH"/>
    <property type="match status" value="5"/>
</dbReference>
<dbReference type="SMART" id="SM00356">
    <property type="entry name" value="ZnF_C3H1"/>
    <property type="match status" value="5"/>
</dbReference>
<dbReference type="SUPFAM" id="SSF90229">
    <property type="entry name" value="CCCH zinc finger"/>
    <property type="match status" value="5"/>
</dbReference>
<dbReference type="PROSITE" id="PS50103">
    <property type="entry name" value="ZF_C3H1"/>
    <property type="match status" value="5"/>
</dbReference>
<evidence type="ECO:0000255" key="1">
    <source>
        <dbReference type="PROSITE-ProRule" id="PRU00723"/>
    </source>
</evidence>
<evidence type="ECO:0000256" key="2">
    <source>
        <dbReference type="SAM" id="MobiDB-lite"/>
    </source>
</evidence>
<evidence type="ECO:0000303" key="3">
    <source>
    </source>
</evidence>
<evidence type="ECO:0000305" key="4"/>
<accession>Q2R4J4</accession>
<accession>Q0ISS4</accession>
<organism>
    <name type="scientific">Oryza sativa subsp. japonica</name>
    <name type="common">Rice</name>
    <dbReference type="NCBI Taxonomy" id="39947"/>
    <lineage>
        <taxon>Eukaryota</taxon>
        <taxon>Viridiplantae</taxon>
        <taxon>Streptophyta</taxon>
        <taxon>Embryophyta</taxon>
        <taxon>Tracheophyta</taxon>
        <taxon>Spermatophyta</taxon>
        <taxon>Magnoliopsida</taxon>
        <taxon>Liliopsida</taxon>
        <taxon>Poales</taxon>
        <taxon>Poaceae</taxon>
        <taxon>BOP clade</taxon>
        <taxon>Oryzoideae</taxon>
        <taxon>Oryzeae</taxon>
        <taxon>Oryzinae</taxon>
        <taxon>Oryza</taxon>
        <taxon>Oryza sativa</taxon>
    </lineage>
</organism>
<proteinExistence type="evidence at transcript level"/>
<gene>
    <name type="ordered locus">Os11g0472000</name>
    <name type="ordered locus">LOC_Os11g28270</name>
</gene>
<reference key="1">
    <citation type="journal article" date="2005" name="BMC Biol.">
        <title>The sequence of rice chromosomes 11 and 12, rich in disease resistance genes and recent gene duplications.</title>
        <authorList>
            <consortium name="The rice chromosomes 11 and 12 sequencing consortia"/>
        </authorList>
    </citation>
    <scope>NUCLEOTIDE SEQUENCE [LARGE SCALE GENOMIC DNA]</scope>
    <source>
        <strain>cv. Nipponbare</strain>
    </source>
</reference>
<reference key="2">
    <citation type="journal article" date="2005" name="Nature">
        <title>The map-based sequence of the rice genome.</title>
        <authorList>
            <consortium name="International rice genome sequencing project (IRGSP)"/>
        </authorList>
    </citation>
    <scope>NUCLEOTIDE SEQUENCE [LARGE SCALE GENOMIC DNA]</scope>
    <source>
        <strain>cv. Nipponbare</strain>
    </source>
</reference>
<reference key="3">
    <citation type="journal article" date="2008" name="Nucleic Acids Res.">
        <title>The rice annotation project database (RAP-DB): 2008 update.</title>
        <authorList>
            <consortium name="The rice annotation project (RAP)"/>
        </authorList>
    </citation>
    <scope>GENOME REANNOTATION</scope>
    <source>
        <strain>cv. Nipponbare</strain>
    </source>
</reference>
<reference key="4">
    <citation type="journal article" date="2013" name="Rice">
        <title>Improvement of the Oryza sativa Nipponbare reference genome using next generation sequence and optical map data.</title>
        <authorList>
            <person name="Kawahara Y."/>
            <person name="de la Bastide M."/>
            <person name="Hamilton J.P."/>
            <person name="Kanamori H."/>
            <person name="McCombie W.R."/>
            <person name="Ouyang S."/>
            <person name="Schwartz D.C."/>
            <person name="Tanaka T."/>
            <person name="Wu J."/>
            <person name="Zhou S."/>
            <person name="Childs K.L."/>
            <person name="Davidson R.M."/>
            <person name="Lin H."/>
            <person name="Quesada-Ocampo L."/>
            <person name="Vaillancourt B."/>
            <person name="Sakai H."/>
            <person name="Lee S.S."/>
            <person name="Kim J."/>
            <person name="Numa H."/>
            <person name="Itoh T."/>
            <person name="Buell C.R."/>
            <person name="Matsumoto T."/>
        </authorList>
    </citation>
    <scope>GENOME REANNOTATION</scope>
    <source>
        <strain>cv. Nipponbare</strain>
    </source>
</reference>
<reference key="5">
    <citation type="journal article" date="2003" name="Science">
        <title>Collection, mapping, and annotation of over 28,000 cDNA clones from japonica rice.</title>
        <authorList>
            <consortium name="The rice full-length cDNA consortium"/>
        </authorList>
    </citation>
    <scope>NUCLEOTIDE SEQUENCE [LARGE SCALE MRNA] (ISOFORM 2)</scope>
    <source>
        <strain>cv. Nipponbare</strain>
    </source>
</reference>
<reference key="6">
    <citation type="journal article" date="2008" name="BMC Genomics">
        <title>Genome-wide analysis of CCCH zinc finger family in Arabidopsis and rice.</title>
        <authorList>
            <person name="Wang D."/>
            <person name="Guo Y."/>
            <person name="Wu C."/>
            <person name="Yang G."/>
            <person name="Li Y."/>
            <person name="Zheng C."/>
        </authorList>
    </citation>
    <scope>NOMENCLATURE</scope>
</reference>
<sequence>MAAAPSAGGVGEGSSSSAAAAAAAAAATIGPHVVDEEAMWQMNLGEAMEAGPYPERIGEPDCSYYMRTGLCRFGMTCKFNHPADRKMAVAAARMKGEYPQRIGQPECQYYLKTGTCKFGATCKFHHPREKAAIATRVQLNALGYPLRPNEKECAYYLRTGQCKFGSTCKFHHPQPSNTMVAVRGSVYSPGQSVTSPSQHTYPGAVTNWPLSRSASFIASPRWPGHSSYAQVIVPPGLVQVPGWNPYAAQIGSSSSDDQQRTAGGAQYYTGSRHSETPNMGDQGMFSSYQAGSVPLGLYTVQRESIFPERPDQPECQFYMKTGDCKFGAVCKFHHPKERIIPTPNCALSSLGLPLRPGEPICTFYSRYGICKFGPNCKFDHPMGTVMYGLATSPTGDVSARRMLAPVPAHSEVSPDNVSGRSRRITHSDSQQIPSGERGTEREAS</sequence>